<organism>
    <name type="scientific">Mus musculus</name>
    <name type="common">Mouse</name>
    <dbReference type="NCBI Taxonomy" id="10090"/>
    <lineage>
        <taxon>Eukaryota</taxon>
        <taxon>Metazoa</taxon>
        <taxon>Chordata</taxon>
        <taxon>Craniata</taxon>
        <taxon>Vertebrata</taxon>
        <taxon>Euteleostomi</taxon>
        <taxon>Mammalia</taxon>
        <taxon>Eutheria</taxon>
        <taxon>Euarchontoglires</taxon>
        <taxon>Glires</taxon>
        <taxon>Rodentia</taxon>
        <taxon>Myomorpha</taxon>
        <taxon>Muroidea</taxon>
        <taxon>Muridae</taxon>
        <taxon>Murinae</taxon>
        <taxon>Mus</taxon>
        <taxon>Mus</taxon>
    </lineage>
</organism>
<gene>
    <name type="primary">Lmo4</name>
</gene>
<accession>P61969</accession>
<accession>O00158</accession>
<accession>O88894</accession>
<protein>
    <recommendedName>
        <fullName>LIM domain transcription factor LMO4</fullName>
    </recommendedName>
    <alternativeName>
        <fullName>Breast tumor autoantigen</fullName>
    </alternativeName>
    <alternativeName>
        <fullName>LIM domain only protein 4</fullName>
        <shortName>LMO-4</shortName>
    </alternativeName>
</protein>
<name>LMO4_MOUSE</name>
<proteinExistence type="evidence at protein level"/>
<sequence length="165" mass="17994">MVNPGSSSQPPPVTAGSLSWKRCAGCGGKIADRFLLYAMDSYWHSRCLKCSCCQAQLGDIGTSCYTKSGMILCRNDYIRLFGNSGACSACGQSIPASELVMRAQGNVYHLKCFTCSTCRNRLVPGDRFHYINGSLFCEHDRPTALINGHLNSLQSNPLLPDQKVC</sequence>
<keyword id="KW-0002">3D-structure</keyword>
<keyword id="KW-0440">LIM domain</keyword>
<keyword id="KW-0479">Metal-binding</keyword>
<keyword id="KW-1185">Reference proteome</keyword>
<keyword id="KW-0677">Repeat</keyword>
<keyword id="KW-0804">Transcription</keyword>
<keyword id="KW-0805">Transcription regulation</keyword>
<keyword id="KW-0862">Zinc</keyword>
<dbReference type="EMBL" id="AF074600">
    <property type="protein sequence ID" value="AAC62958.1"/>
    <property type="molecule type" value="mRNA"/>
</dbReference>
<dbReference type="EMBL" id="AF102817">
    <property type="protein sequence ID" value="AAC98510.1"/>
    <property type="molecule type" value="mRNA"/>
</dbReference>
<dbReference type="EMBL" id="AF096996">
    <property type="protein sequence ID" value="AAC83789.1"/>
    <property type="molecule type" value="mRNA"/>
</dbReference>
<dbReference type="EMBL" id="BC003488">
    <property type="protein sequence ID" value="AAH03488.1"/>
    <property type="molecule type" value="mRNA"/>
</dbReference>
<dbReference type="EMBL" id="BC004661">
    <property type="status" value="NOT_ANNOTATED_CDS"/>
    <property type="molecule type" value="mRNA"/>
</dbReference>
<dbReference type="EMBL" id="BC010278">
    <property type="protein sequence ID" value="AAH10278.3"/>
    <property type="molecule type" value="mRNA"/>
</dbReference>
<dbReference type="CCDS" id="CCDS51085.1"/>
<dbReference type="RefSeq" id="NP_001155241.1">
    <property type="nucleotide sequence ID" value="NM_001161769.1"/>
</dbReference>
<dbReference type="RefSeq" id="NP_001155242.1">
    <property type="nucleotide sequence ID" value="NM_001161770.1"/>
</dbReference>
<dbReference type="RefSeq" id="NP_034853.1">
    <property type="nucleotide sequence ID" value="NM_010723.3"/>
</dbReference>
<dbReference type="PDB" id="1M3V">
    <property type="method" value="NMR"/>
    <property type="chains" value="A=16-86"/>
</dbReference>
<dbReference type="PDB" id="1RUT">
    <property type="method" value="X-ray"/>
    <property type="resolution" value="1.30 A"/>
    <property type="chains" value="X=16-152"/>
</dbReference>
<dbReference type="PDB" id="2DFY">
    <property type="method" value="X-ray"/>
    <property type="resolution" value="1.65 A"/>
    <property type="chains" value="C/X=18-161"/>
</dbReference>
<dbReference type="PDB" id="2L4Z">
    <property type="method" value="NMR"/>
    <property type="chains" value="A=16-82"/>
</dbReference>
<dbReference type="PDB" id="2MBV">
    <property type="method" value="NMR"/>
    <property type="chains" value="A=77-147"/>
</dbReference>
<dbReference type="PDBsum" id="1M3V"/>
<dbReference type="PDBsum" id="1RUT"/>
<dbReference type="PDBsum" id="2DFY"/>
<dbReference type="PDBsum" id="2L4Z"/>
<dbReference type="PDBsum" id="2MBV"/>
<dbReference type="BMRB" id="P61969"/>
<dbReference type="SMR" id="P61969"/>
<dbReference type="BioGRID" id="201180">
    <property type="interactions" value="12"/>
</dbReference>
<dbReference type="FunCoup" id="P61969">
    <property type="interactions" value="1218"/>
</dbReference>
<dbReference type="IntAct" id="P61969">
    <property type="interactions" value="3"/>
</dbReference>
<dbReference type="STRING" id="10090.ENSMUSP00000113840"/>
<dbReference type="iPTMnet" id="P61969"/>
<dbReference type="PhosphoSitePlus" id="P61969"/>
<dbReference type="PaxDb" id="10090-ENSMUSP00000113840"/>
<dbReference type="PeptideAtlas" id="P61969"/>
<dbReference type="ProteomicsDB" id="292103"/>
<dbReference type="Pumba" id="P61969"/>
<dbReference type="Antibodypedia" id="33592">
    <property type="antibodies" value="306 antibodies from 34 providers"/>
</dbReference>
<dbReference type="DNASU" id="16911"/>
<dbReference type="Ensembl" id="ENSMUST00000120539.8">
    <property type="protein sequence ID" value="ENSMUSP00000113840.2"/>
    <property type="gene ID" value="ENSMUSG00000028266.18"/>
</dbReference>
<dbReference type="Ensembl" id="ENSMUST00000121112.6">
    <property type="protein sequence ID" value="ENSMUSP00000113865.2"/>
    <property type="gene ID" value="ENSMUSG00000028266.18"/>
</dbReference>
<dbReference type="Ensembl" id="ENSMUST00000121796.8">
    <property type="protein sequence ID" value="ENSMUSP00000113513.2"/>
    <property type="gene ID" value="ENSMUSG00000028266.18"/>
</dbReference>
<dbReference type="GeneID" id="16911"/>
<dbReference type="KEGG" id="mmu:16911"/>
<dbReference type="UCSC" id="uc008rpl.2">
    <property type="organism name" value="mouse"/>
</dbReference>
<dbReference type="AGR" id="MGI:109360"/>
<dbReference type="CTD" id="8543"/>
<dbReference type="MGI" id="MGI:109360">
    <property type="gene designation" value="Lmo4"/>
</dbReference>
<dbReference type="VEuPathDB" id="HostDB:ENSMUSG00000028266"/>
<dbReference type="eggNOG" id="KOG0490">
    <property type="taxonomic scope" value="Eukaryota"/>
</dbReference>
<dbReference type="GeneTree" id="ENSGT00940000157730"/>
<dbReference type="HOGENOM" id="CLU_001357_7_1_1"/>
<dbReference type="InParanoid" id="P61969"/>
<dbReference type="OMA" id="SLPWKRC"/>
<dbReference type="OrthoDB" id="6352355at2759"/>
<dbReference type="PhylomeDB" id="P61969"/>
<dbReference type="TreeFam" id="TF351071"/>
<dbReference type="BioGRID-ORCS" id="16911">
    <property type="hits" value="5 hits in 76 CRISPR screens"/>
</dbReference>
<dbReference type="ChiTaRS" id="Lmo4">
    <property type="organism name" value="mouse"/>
</dbReference>
<dbReference type="EvolutionaryTrace" id="P61969"/>
<dbReference type="PRO" id="PR:P61969"/>
<dbReference type="Proteomes" id="UP000000589">
    <property type="component" value="Chromosome 3"/>
</dbReference>
<dbReference type="RNAct" id="P61969">
    <property type="molecule type" value="protein"/>
</dbReference>
<dbReference type="Bgee" id="ENSMUSG00000028266">
    <property type="expression patterns" value="Expressed in embryonic brain and 302 other cell types or tissues"/>
</dbReference>
<dbReference type="ExpressionAtlas" id="P61969">
    <property type="expression patterns" value="baseline and differential"/>
</dbReference>
<dbReference type="GO" id="GO:0031252">
    <property type="term" value="C:cell leading edge"/>
    <property type="evidence" value="ECO:0000314"/>
    <property type="project" value="UniProtKB"/>
</dbReference>
<dbReference type="GO" id="GO:0005634">
    <property type="term" value="C:nucleus"/>
    <property type="evidence" value="ECO:0000314"/>
    <property type="project" value="MGI"/>
</dbReference>
<dbReference type="GO" id="GO:0090575">
    <property type="term" value="C:RNA polymerase II transcription regulator complex"/>
    <property type="evidence" value="ECO:0000314"/>
    <property type="project" value="MGI"/>
</dbReference>
<dbReference type="GO" id="GO:0140297">
    <property type="term" value="F:DNA-binding transcription factor binding"/>
    <property type="evidence" value="ECO:0000353"/>
    <property type="project" value="UniProtKB"/>
</dbReference>
<dbReference type="GO" id="GO:0046872">
    <property type="term" value="F:metal ion binding"/>
    <property type="evidence" value="ECO:0007669"/>
    <property type="project" value="UniProtKB-KW"/>
</dbReference>
<dbReference type="GO" id="GO:0003714">
    <property type="term" value="F:transcription corepressor activity"/>
    <property type="evidence" value="ECO:0000314"/>
    <property type="project" value="UniProtKB"/>
</dbReference>
<dbReference type="GO" id="GO:0008045">
    <property type="term" value="P:motor neuron axon guidance"/>
    <property type="evidence" value="ECO:0000316"/>
    <property type="project" value="UniProtKB"/>
</dbReference>
<dbReference type="GO" id="GO:0031333">
    <property type="term" value="P:negative regulation of protein-containing complex assembly"/>
    <property type="evidence" value="ECO:0000314"/>
    <property type="project" value="UniProtKB"/>
</dbReference>
<dbReference type="GO" id="GO:0000122">
    <property type="term" value="P:negative regulation of transcription by RNA polymerase II"/>
    <property type="evidence" value="ECO:0000315"/>
    <property type="project" value="UniProtKB"/>
</dbReference>
<dbReference type="GO" id="GO:0001843">
    <property type="term" value="P:neural tube closure"/>
    <property type="evidence" value="ECO:0000315"/>
    <property type="project" value="UniProtKB"/>
</dbReference>
<dbReference type="GO" id="GO:0033674">
    <property type="term" value="P:positive regulation of kinase activity"/>
    <property type="evidence" value="ECO:0000314"/>
    <property type="project" value="UniProtKB"/>
</dbReference>
<dbReference type="GO" id="GO:0045944">
    <property type="term" value="P:positive regulation of transcription by RNA polymerase II"/>
    <property type="evidence" value="ECO:0000316"/>
    <property type="project" value="MGI"/>
</dbReference>
<dbReference type="GO" id="GO:0050865">
    <property type="term" value="P:regulation of cell activation"/>
    <property type="evidence" value="ECO:0000315"/>
    <property type="project" value="MGI"/>
</dbReference>
<dbReference type="GO" id="GO:0042659">
    <property type="term" value="P:regulation of cell fate specification"/>
    <property type="evidence" value="ECO:0000315"/>
    <property type="project" value="MGI"/>
</dbReference>
<dbReference type="GO" id="GO:0030334">
    <property type="term" value="P:regulation of cell migration"/>
    <property type="evidence" value="ECO:0000314"/>
    <property type="project" value="UniProtKB"/>
</dbReference>
<dbReference type="GO" id="GO:0006357">
    <property type="term" value="P:regulation of transcription by RNA polymerase II"/>
    <property type="evidence" value="ECO:0000314"/>
    <property type="project" value="MGI"/>
</dbReference>
<dbReference type="GO" id="GO:0021527">
    <property type="term" value="P:spinal cord association neuron differentiation"/>
    <property type="evidence" value="ECO:0000316"/>
    <property type="project" value="MGI"/>
</dbReference>
<dbReference type="GO" id="GO:0021520">
    <property type="term" value="P:spinal cord motor neuron cell fate specification"/>
    <property type="evidence" value="ECO:0000315"/>
    <property type="project" value="UniProtKB"/>
</dbReference>
<dbReference type="GO" id="GO:0021522">
    <property type="term" value="P:spinal cord motor neuron differentiation"/>
    <property type="evidence" value="ECO:0000314"/>
    <property type="project" value="MGI"/>
</dbReference>
<dbReference type="GO" id="GO:0048538">
    <property type="term" value="P:thymus development"/>
    <property type="evidence" value="ECO:0000316"/>
    <property type="project" value="MGI"/>
</dbReference>
<dbReference type="GO" id="GO:0021514">
    <property type="term" value="P:ventral spinal cord interneuron differentiation"/>
    <property type="evidence" value="ECO:0000314"/>
    <property type="project" value="MGI"/>
</dbReference>
<dbReference type="GO" id="GO:0003281">
    <property type="term" value="P:ventricular septum development"/>
    <property type="evidence" value="ECO:0000315"/>
    <property type="project" value="MGI"/>
</dbReference>
<dbReference type="CDD" id="cd09386">
    <property type="entry name" value="LIM1_LMO4"/>
    <property type="match status" value="1"/>
</dbReference>
<dbReference type="CDD" id="cd09387">
    <property type="entry name" value="LIM2_LMO4"/>
    <property type="match status" value="1"/>
</dbReference>
<dbReference type="FunFam" id="2.10.110.10:FF:000015">
    <property type="entry name" value="LIM domain only 3"/>
    <property type="match status" value="1"/>
</dbReference>
<dbReference type="FunFam" id="2.10.110.10:FF:000051">
    <property type="entry name" value="LIM domain transcription factor LMO4"/>
    <property type="match status" value="1"/>
</dbReference>
<dbReference type="Gene3D" id="2.10.110.10">
    <property type="entry name" value="Cysteine Rich Protein"/>
    <property type="match status" value="2"/>
</dbReference>
<dbReference type="IDEAL" id="IID50048"/>
<dbReference type="InterPro" id="IPR050945">
    <property type="entry name" value="LMO_RBTN_TF"/>
</dbReference>
<dbReference type="InterPro" id="IPR001781">
    <property type="entry name" value="Znf_LIM"/>
</dbReference>
<dbReference type="PANTHER" id="PTHR45787">
    <property type="entry name" value="LD11652P"/>
    <property type="match status" value="1"/>
</dbReference>
<dbReference type="PANTHER" id="PTHR45787:SF5">
    <property type="entry name" value="LIM DOMAIN TRANSCRIPTION FACTOR LMO4"/>
    <property type="match status" value="1"/>
</dbReference>
<dbReference type="Pfam" id="PF00412">
    <property type="entry name" value="LIM"/>
    <property type="match status" value="2"/>
</dbReference>
<dbReference type="SMART" id="SM00132">
    <property type="entry name" value="LIM"/>
    <property type="match status" value="2"/>
</dbReference>
<dbReference type="SUPFAM" id="SSF57716">
    <property type="entry name" value="Glucocorticoid receptor-like (DNA-binding domain)"/>
    <property type="match status" value="4"/>
</dbReference>
<dbReference type="PROSITE" id="PS00478">
    <property type="entry name" value="LIM_DOMAIN_1"/>
    <property type="match status" value="2"/>
</dbReference>
<dbReference type="PROSITE" id="PS50023">
    <property type="entry name" value="LIM_DOMAIN_2"/>
    <property type="match status" value="2"/>
</dbReference>
<reference key="1">
    <citation type="journal article" date="1998" name="Proc. Natl. Acad. Sci. U.S.A.">
        <title>Identification and characterization of LMO4, an LMO gene with a novel pattern of expression during embryogenesis.</title>
        <authorList>
            <person name="Kenny D.A."/>
            <person name="Jurata L.W."/>
            <person name="Saga Y."/>
            <person name="Gill G.N."/>
        </authorList>
    </citation>
    <scope>NUCLEOTIDE SEQUENCE [MRNA]</scope>
</reference>
<reference key="2">
    <citation type="journal article" date="1998" name="Proc. Natl. Acad. Sci. U.S.A.">
        <title>Mouse deformed epidermal autoregulatory factor 1 recruits a LIM domain factor, LMO-4, and CLIM coregulators.</title>
        <authorList>
            <person name="Sugihara T.M."/>
            <person name="Bach I."/>
            <person name="Kioussi C."/>
            <person name="Rosenfeld M.G."/>
            <person name="Andersen B."/>
        </authorList>
    </citation>
    <scope>NUCLEOTIDE SEQUENCE [MRNA]</scope>
    <scope>INTERACTION WITH LDB1 AND LDB2</scope>
</reference>
<reference key="3">
    <citation type="journal article" date="1998" name="Oncogene">
        <title>Identification of the LMO4 gene encoding an interaction partner of the LIM-binding protein LDB1/NLI1: a candidate for displacement by LMO proteins in T cell acute leukaemia.</title>
        <authorList>
            <person name="Grutz G."/>
            <person name="Forster A."/>
            <person name="Rabbitts T.H."/>
        </authorList>
    </citation>
    <scope>NUCLEOTIDE SEQUENCE [MRNA]</scope>
</reference>
<reference key="4">
    <citation type="journal article" date="2004" name="Genome Res.">
        <title>The status, quality, and expansion of the NIH full-length cDNA project: the Mammalian Gene Collection (MGC).</title>
        <authorList>
            <consortium name="The MGC Project Team"/>
        </authorList>
    </citation>
    <scope>NUCLEOTIDE SEQUENCE [LARGE SCALE MRNA]</scope>
    <source>
        <tissue>Mammary tumor</tissue>
    </source>
</reference>
<reference key="5">
    <citation type="journal article" date="2002" name="J. Biol. Chem.">
        <title>The LIM domain protein LMO4 interacts with the cofactor CtIP and the tumor suppressor BRCA1 and inhibits BRCA1 activity.</title>
        <authorList>
            <person name="Sum E.Y."/>
            <person name="Peng B."/>
            <person name="Yu X."/>
            <person name="Chen J."/>
            <person name="Byrne J."/>
            <person name="Lindeman G.J."/>
            <person name="Visvader J.E."/>
        </authorList>
    </citation>
    <scope>INTERACTION WITH BRCA1 AND RBBP8</scope>
</reference>
<reference key="6">
    <citation type="journal article" date="2008" name="Dev. Cell">
        <title>A regulatory network to segregate the identity of neuronal subtypes.</title>
        <authorList>
            <person name="Lee S."/>
            <person name="Lee B."/>
            <person name="Joshi K."/>
            <person name="Pfaff S.L."/>
            <person name="Lee J.W."/>
            <person name="Lee S.K."/>
        </authorList>
    </citation>
    <scope>FUNCTION</scope>
    <scope>INTERACTION WITH LHX3-CONTAINING COMPLEXES</scope>
    <scope>DEVELOPMENTAL STAGE</scope>
    <scope>DISRUPTION PHENOTYPE</scope>
</reference>
<reference key="7">
    <citation type="journal article" date="2012" name="PLoS ONE">
        <title>Contribution of DEAF1 structural domains to the interaction with the breast cancer oncogene LMO4.</title>
        <authorList>
            <person name="Cubeddu L."/>
            <person name="Joseph S."/>
            <person name="Richard D.J."/>
            <person name="Matthews J.M."/>
        </authorList>
    </citation>
    <scope>INTERACTION WITH DEAF1</scope>
</reference>
<reference key="8">
    <citation type="journal article" date="2003" name="EMBO J.">
        <title>Structural basis for the recognition of ldb1 by the N-terminal LIM domains of LMO2 and LMO4.</title>
        <authorList>
            <person name="Deane J.E."/>
            <person name="Mackay J.P."/>
            <person name="Kwan A.H.Y."/>
            <person name="Sum E.Y.M."/>
            <person name="Visvader J.E."/>
            <person name="Matthews J.M."/>
        </authorList>
    </citation>
    <scope>STRUCTURE BY NMR OF 16-86 IN COMPLEX WITH LDB1</scope>
</reference>
<reference key="9">
    <citation type="journal article" date="2004" name="EMBO J.">
        <title>Tandem LIM domains provide synergistic binding in the LMO4:Ldb1 complex.</title>
        <authorList>
            <person name="Deane J.E."/>
            <person name="Ryan D.P."/>
            <person name="Sunde M."/>
            <person name="Maher M.J."/>
            <person name="Guss J.M."/>
            <person name="Visvader J.E."/>
            <person name="Matthews J.M."/>
        </authorList>
    </citation>
    <scope>X-RAY CRYSTALLOGRAPHY (1.3 ANGSTROMS) OF 16-152 IN COMPLEX WITH LDB1</scope>
</reference>
<reference key="10">
    <citation type="journal article" date="2006" name="Protein Sci.">
        <title>Stabilization of a binary protein complex by intein-mediated cyclization.</title>
        <authorList>
            <person name="Jeffries C.M."/>
            <person name="Graham S.C."/>
            <person name="Stokes P.H."/>
            <person name="Collyer C.A."/>
            <person name="Guss J.M."/>
            <person name="Matthews J.M."/>
        </authorList>
    </citation>
    <scope>X-RAY CRYSTALLOGRAPHY (1.65 ANGSTROMS) OF 18-152 IN COMPLEX WITH LDB1</scope>
</reference>
<reference evidence="10" key="11">
    <citation type="journal article" date="2013" name="J. Mol. Biol.">
        <title>Structural basis of the interaction of the breast cancer oncogene LMO4 with the tumour suppressor CtIP/RBBP8.</title>
        <authorList>
            <person name="Stokes P.H."/>
            <person name="Liew C.W."/>
            <person name="Kwan A.H."/>
            <person name="Foo P."/>
            <person name="Barker H.E."/>
            <person name="Djamirze A."/>
            <person name="O'Reilly V."/>
            <person name="Visvader J.E."/>
            <person name="Mackay J.P."/>
            <person name="Matthews J.M."/>
        </authorList>
    </citation>
    <scope>STRUCTURE BY NMR OF 18-82 IN COMPLEX WITH HUMAN RBBP8</scope>
    <scope>INTERACTION WITH RPPB8 AND LDB1</scope>
    <scope>MUTAGENESIS OF 33-ARG-PHE-34</scope>
</reference>
<evidence type="ECO:0000255" key="1">
    <source>
        <dbReference type="PROSITE-ProRule" id="PRU00125"/>
    </source>
</evidence>
<evidence type="ECO:0000269" key="2">
    <source>
    </source>
</evidence>
<evidence type="ECO:0000269" key="3">
    <source>
    </source>
</evidence>
<evidence type="ECO:0000269" key="4">
    <source>
    </source>
</evidence>
<evidence type="ECO:0000269" key="5">
    <source>
    </source>
</evidence>
<evidence type="ECO:0000269" key="6">
    <source>
    </source>
</evidence>
<evidence type="ECO:0000269" key="7">
    <source>
    </source>
</evidence>
<evidence type="ECO:0000269" key="8">
    <source>
    </source>
</evidence>
<evidence type="ECO:0000269" key="9">
    <source>
    </source>
</evidence>
<evidence type="ECO:0007744" key="10">
    <source>
        <dbReference type="PDB" id="2L4Z"/>
    </source>
</evidence>
<evidence type="ECO:0007829" key="11">
    <source>
        <dbReference type="PDB" id="2DFY"/>
    </source>
</evidence>
<comment type="function">
    <text evidence="6">Transcription cofactor (PubMed:18539116). Plays a role in establishing motor neuron identity, in concert with MNX1, acting, at least in part, to disrupt LDB1-LHX3 complexes thereby negatively modulating interneuron genes in motor neurons (PubMed:18539116).</text>
</comment>
<comment type="subunit">
    <text evidence="2 3 4 5 6 7 8 9">Interacts strongly with LDBS (PubMed:12727888, PubMed:15343268, PubMed:17001033, PubMed:18539116, PubMed:9860983). Interacts with LDB2 and LDB1 (PubMed:12727888, PubMed:15343268, PubMed:17001033, PubMed:18539116, PubMed:23353824, PubMed:9860983). Interaction with complexes consisting of at least LDB1 and LHX3 acts to disassemble the complex; may preferentially disassemble LDB1-LHX3 complexes rather than complexes consisting of LDB1, LHX3 and ISL1 (PubMed:18539116). Interacts (via the LIM zinc-binding domain 1) with RBBP8 (PubMed:11751867, PubMed:23353824). Interacts with both RPPB8 and LDB1 through the same face and cannot bind to both proteins simultaneously (PubMed:23353824). Interacts with BRCA1 (via the BRCT domains); the interaction represses BRCA1 transcriptional activity (PubMed:11751867). Interacts with DEAF1; LMO4 blocks export from nucleus (PubMed:22723967).</text>
</comment>
<comment type="tissue specificity">
    <text>Expressed in a wide variety of tissues.</text>
</comment>
<comment type="developmental stage">
    <text evidence="6">Expressed in the developing spinal cord in the ventricular zone and down-regulated in the lateral zone at 11.5 dpc (at protein level) (PubMed:18539116). Highly expressed in motor neurons that emerge from the ventricular zone at 11.5 dpc (at protein level) (PubMed:18539116). At 12.5 dpc, highly expressed in motor neurons in medial median motor column (MMCm), which innervate dorsal axial muscles (PubMed:18539116).</text>
</comment>
<comment type="disruption phenotype">
    <text evidence="6">Overall patterning of ventral spinal cord neurons is normal at 12.5 dpc and 14.5 dpc, but there are additional ectopic V2 interneurons (V2-INs) at all axial levels of the spinal cord; phenotype exacerbated in an MNX1 mutant background (PubMed:18539116). In an MNX1 mutant background, genes typically expressed in V2-INs expressed ectopically in motor neurons (MNs) (PubMed:18539116). Abnormal guidance of motor axons in an MNX1 mutant background (PubMed:18539116).</text>
</comment>
<feature type="chain" id="PRO_0000075821" description="LIM domain transcription factor LMO4">
    <location>
        <begin position="1"/>
        <end position="165"/>
    </location>
</feature>
<feature type="domain" description="LIM zinc-binding 1" evidence="1">
    <location>
        <begin position="23"/>
        <end position="83"/>
    </location>
</feature>
<feature type="domain" description="LIM zinc-binding 2" evidence="1">
    <location>
        <begin position="87"/>
        <end position="147"/>
    </location>
</feature>
<feature type="mutagenesis site" description="Reduces binding to RBBP8." evidence="8">
    <original>RF</original>
    <variation>AA</variation>
    <location>
        <begin position="33"/>
        <end position="34"/>
    </location>
</feature>
<feature type="turn" evidence="11">
    <location>
        <begin position="24"/>
        <end position="26"/>
    </location>
</feature>
<feature type="strand" evidence="11">
    <location>
        <begin position="33"/>
        <end position="38"/>
    </location>
</feature>
<feature type="strand" evidence="11">
    <location>
        <begin position="41"/>
        <end position="43"/>
    </location>
</feature>
<feature type="helix" evidence="11">
    <location>
        <begin position="45"/>
        <end position="47"/>
    </location>
</feature>
<feature type="turn" evidence="11">
    <location>
        <begin position="51"/>
        <end position="53"/>
    </location>
</feature>
<feature type="helix" evidence="11">
    <location>
        <begin position="57"/>
        <end position="60"/>
    </location>
</feature>
<feature type="strand" evidence="11">
    <location>
        <begin position="62"/>
        <end position="67"/>
    </location>
</feature>
<feature type="strand" evidence="11">
    <location>
        <begin position="70"/>
        <end position="72"/>
    </location>
</feature>
<feature type="helix" evidence="11">
    <location>
        <begin position="74"/>
        <end position="81"/>
    </location>
</feature>
<feature type="turn" evidence="11">
    <location>
        <begin position="88"/>
        <end position="90"/>
    </location>
</feature>
<feature type="strand" evidence="11">
    <location>
        <begin position="98"/>
        <end position="103"/>
    </location>
</feature>
<feature type="strand" evidence="11">
    <location>
        <begin position="106"/>
        <end position="109"/>
    </location>
</feature>
<feature type="helix" evidence="11">
    <location>
        <begin position="110"/>
        <end position="112"/>
    </location>
</feature>
<feature type="turn" evidence="11">
    <location>
        <begin position="116"/>
        <end position="118"/>
    </location>
</feature>
<feature type="strand" evidence="11">
    <location>
        <begin position="127"/>
        <end position="131"/>
    </location>
</feature>
<feature type="strand" evidence="11">
    <location>
        <begin position="134"/>
        <end position="137"/>
    </location>
</feature>
<feature type="helix" evidence="11">
    <location>
        <begin position="138"/>
        <end position="140"/>
    </location>
</feature>
<feature type="turn" evidence="11">
    <location>
        <begin position="143"/>
        <end position="145"/>
    </location>
</feature>